<accession>Q8TEW0</accession>
<accession>F5H5T0</accession>
<accession>Q5T2U1</accession>
<accession>Q5VUA2</accession>
<accession>Q5VUA3</accession>
<accession>Q5VWV0</accession>
<accession>Q5VWV1</accession>
<accession>Q5VWV3</accession>
<accession>Q5VWV4</accession>
<accession>Q5VWV5</accession>
<accession>Q6IQ47</accession>
<accession>Q8TCZ9</accession>
<accession>Q8TEW1</accession>
<accession>Q8TEW2</accession>
<accession>Q8TEW3</accession>
<accession>Q96K28</accession>
<accession>Q96RM6</accession>
<accession>Q96RM7</accession>
<accession>Q9BY57</accession>
<accession>Q9BY58</accession>
<accession>Q9HC48</accession>
<accession>Q9NWL4</accession>
<accession>Q9NYE6</accession>
<name>PARD3_HUMAN</name>
<proteinExistence type="evidence at protein level"/>
<sequence length="1356" mass="151423">MKVTVCFGRTRVVVPCGDGHMKVFSLIQQAVTRYRKAIAKDPNYWIQVHRLEHGDGGILDLDDILCDVADDKDRLVAVFDEQDPHHGGDGTSASSTGTQSPEIFGSELGTNNVSAFQPYQATSEIEVTPSVLRANMPLHVRRSSDPALIGLSTSVSDSNFSSEEPSRKNPTRWSTTAGFLKQNTAGSPKTCDRKKDENYRSLPRDTSNWSNQFQRDNARSSLSASHPMVGKWLEKQEQDEDGTEEDNSRVEPVGHADTGLEHIPNFSLDDMVKLVEVPNDGGPLGIHVVPFSARGGRTLGLLVKRLEKGGKAEHENLFRENDCIVRINDGDLRNRRFEQAQHMFRQAMRTPIIWFHVVPAANKEQYEQLSQSEKNNYYSSRFSPDSQYIDNRSVNSAGLHTVQRAPRLNHPPEQIDSHSRLPHSAHPSGKPPSAPASAPQNVFSTTVSSGYNTKKIGKRLNIQLKKGTEGLGFSITSRDVTIGGSAPIYVKNILPRGAAIQDGRLKAGDRLIEVNGVDLVGKSQEEVVSLLRSTKMEGTVSLLVFRQEDAFHPRELNAEPSQMQIPKETKAEDEDIVLTPDGTREFLTFEVPLNDSGSAGLGVSVKGNRSKENHADLGIFVKSIINGGAASKDGRLRVNDQLIAVNGESLLGKTNQDAMETLRRSMSTEGNKRGMIQLIVARRISKCNELKSPGSPPGPELPIETALDDRERRISHSLYSGIEGLDESPSRNAALSRIMGESGKYQLSPTVNMPQDDTVIIEDDRLPVLPPHLSDQSSSSSHDDVGFVTADAGTWAKAAISDSADCSLSPDVDPVLAFQREGFGRQSMSEKRTKQFSDASQLDFVKTRKSKSMDLGIADETKLNTVDDQKAGSPSRDVGPSLGLKKSSSLESLQTAVAEVTLNGDIPFHRPRPRIIRGRGCNESFRAAIDKSYDKPAVDDDDEGMETLEEDTEESSRSGRESVSTASDQPSHSLERQMNGNQEKGDKTDRKKDKTGKEKKKDRDKEKDKMKAKKGMLKGLGDMFRFGKHRKDDKIEKTGKIKIQESFTSEEERIRMKQEQERIQAKTREFRERQARERDYAEIQDFHRTFGCDDELMYGGVSSYEGSMALNARPQSPREGHMMDALYAQVKKPRNSKPSPVDSNRSTPSNHDRIQRLRQEFQQAKQDEDVEDRRRTYSFEQPWPNARPATQSGRHSVSVEVQMQRQRQEERESSQQAQRQYSSLPRQSRKNASSVSQDSWEQNYSPGEGFQSAKENPRYSSYQGSRNGYLGGHGFNARVMLETQELLRQEQRRKEQQMKKQPPSEGPSNYDSYKKVQDPSYAPPKGPFRQDVPPSPSQVARLNRLQTPEKGRPFYS</sequence>
<protein>
    <recommendedName>
        <fullName>Partitioning defective 3 homolog</fullName>
        <shortName>PAR-3</shortName>
        <shortName>PARD-3</shortName>
    </recommendedName>
    <alternativeName>
        <fullName>Atypical PKC isotype-specific-interacting protein</fullName>
        <shortName>ASIP</shortName>
    </alternativeName>
    <alternativeName>
        <fullName>CTCL tumor antigen se2-5</fullName>
    </alternativeName>
    <alternativeName>
        <fullName>PAR3-alpha</fullName>
    </alternativeName>
</protein>
<comment type="function">
    <text evidence="2 3 7 8 14 19">Adapter protein involved in asymmetrical cell division and cell polarization processes (PubMed:10954424, PubMed:27925688). Seems to play a central role in the formation of epithelial tight junctions (PubMed:27925688). Targets the phosphatase PTEN to cell junctions (By similarity). Involved in Schwann cell peripheral myelination (By similarity). Association with PARD6B may prevent the interaction of PARD3 with F11R/JAM1, thereby preventing tight junction assembly (By similarity). The PARD6-PARD3 complex links GTP-bound Rho small GTPases to atypical protein kinase C proteins (PubMed:10934474). Required for establishment of neuronal polarity and normal axon formation in cultured hippocampal neurons (PubMed:19812038, PubMed:27925688).</text>
</comment>
<comment type="subunit">
    <text evidence="2 7 8 9 10 11 12 13 14 15 16 17 18 19">Interacts (via PDZ 1 domain) with F11R/JAM1, PARD6A and PARD6B. Interacts with PRCKI and CDH5. Interacts (via PDZ 3 domain) with PTEN (via C-terminus) (By similarity). Part of a complex with PARD6A or PARD6B, PRKCI or PRKCZ and CDC42 or RAC1. Component of a complex whose core is composed of ARHGAP17, AMOT, PALS1, PATJ and PARD3/PAR3. Interacts with LIMK2, AURKA and AURKB. Component of the Par polarity complex, composed of at least phosphorylated PRKCZ, PARD3 and TIAM1. Directly interacts with TIAM1 and TIAM2. Interacts with ECT2, FBF1 and SIRT2. Interacts (via coiled-coil domain) with FRMD4A (By similarity). Found in a complex with PARD3, CYTH1 and FRMD4A (By similarity). Interacts with SAPCD2 (PubMed:26766442). Interacts with PRKCA (PubMed:27925688).</text>
</comment>
<comment type="subunit">
    <molecule>Isoform 8</molecule>
    <text evidence="2">Interacts with PRKCZ.</text>
</comment>
<comment type="interaction">
    <interactant intactId="EBI-81968">
        <id>Q8TEW0</id>
    </interactant>
    <interactant intactId="EBI-2903122">
        <id>P33151</id>
        <label>CDH5</label>
    </interactant>
    <organismsDiffer>false</organismsDiffer>
    <experiments>5</experiments>
</comment>
<comment type="interaction">
    <interactant intactId="EBI-81968">
        <id>Q8TEW0</id>
    </interactant>
    <interactant intactId="EBI-742600">
        <id>Q9Y624</id>
        <label>F11R</label>
    </interactant>
    <organismsDiffer>false</organismsDiffer>
    <experiments>2</experiments>
</comment>
<comment type="interaction">
    <interactant intactId="EBI-81968">
        <id>Q8TEW0</id>
    </interactant>
    <interactant intactId="EBI-81876">
        <id>Q9NPB6</id>
        <label>PARD6A</label>
    </interactant>
    <organismsDiffer>false</organismsDiffer>
    <experiments>9</experiments>
</comment>
<comment type="interaction">
    <interactant intactId="EBI-81968">
        <id>Q8TEW0</id>
    </interactant>
    <interactant intactId="EBI-295391">
        <id>Q9BYG5</id>
        <label>PARD6B</label>
    </interactant>
    <organismsDiffer>false</organismsDiffer>
    <experiments>7</experiments>
</comment>
<comment type="interaction">
    <interactant intactId="EBI-81968">
        <id>Q8TEW0</id>
    </interactant>
    <interactant intactId="EBI-295417">
        <id>Q9BYG4</id>
        <label>PARD6G</label>
    </interactant>
    <organismsDiffer>false</organismsDiffer>
    <experiments>3</experiments>
</comment>
<comment type="interaction">
    <interactant intactId="EBI-81968">
        <id>Q8TEW0</id>
    </interactant>
    <interactant intactId="EBI-302345">
        <id>Q8ND90</id>
        <label>PNMA1</label>
    </interactant>
    <organismsDiffer>false</organismsDiffer>
    <experiments>4</experiments>
</comment>
<comment type="interaction">
    <interactant intactId="EBI-81968">
        <id>Q8TEW0</id>
    </interactant>
    <interactant intactId="EBI-286199">
        <id>P41743</id>
        <label>PRKCI</label>
    </interactant>
    <organismsDiffer>false</organismsDiffer>
    <experiments>5</experiments>
</comment>
<comment type="interaction">
    <interactant intactId="EBI-81968">
        <id>Q8TEW0</id>
    </interactant>
    <interactant intactId="EBI-476295">
        <id>P31947</id>
        <label>SFN</label>
    </interactant>
    <organismsDiffer>false</organismsDiffer>
    <experiments>4</experiments>
</comment>
<comment type="interaction">
    <interactant intactId="EBI-81968">
        <id>Q8TEW0</id>
    </interactant>
    <interactant intactId="EBI-366083">
        <id>P04637</id>
        <label>TP53</label>
    </interactant>
    <organismsDiffer>false</organismsDiffer>
    <experiments>3</experiments>
</comment>
<comment type="interaction">
    <interactant intactId="EBI-81968">
        <id>Q8TEW0</id>
    </interactant>
    <interactant intactId="EBI-306940">
        <id>Q04917</id>
        <label>YWHAH</label>
    </interactant>
    <organismsDiffer>false</organismsDiffer>
    <experiments>13</experiments>
</comment>
<comment type="interaction">
    <interactant intactId="EBI-81968">
        <id>Q8TEW0</id>
    </interactant>
    <interactant intactId="EBI-347088">
        <id>P63104</id>
        <label>YWHAZ</label>
    </interactant>
    <organismsDiffer>false</organismsDiffer>
    <experiments>10</experiments>
</comment>
<comment type="interaction">
    <interactant intactId="EBI-81968">
        <id>Q8TEW0</id>
    </interactant>
    <interactant intactId="EBI-81861">
        <id>Q9JK83</id>
        <label>Pard6b</label>
    </interactant>
    <organismsDiffer>true</organismsDiffer>
    <experiments>3</experiments>
</comment>
<comment type="interaction">
    <interactant intactId="EBI-81968">
        <id>Q8TEW0</id>
    </interactant>
    <interactant intactId="EBI-82016">
        <id>Q62074</id>
        <label>Prkci</label>
    </interactant>
    <organismsDiffer>true</organismsDiffer>
    <experiments>7</experiments>
</comment>
<comment type="interaction">
    <interactant intactId="EBI-81968">
        <id>Q8TEW0</id>
    </interactant>
    <interactant intactId="EBI-7565978">
        <id>Q6ZPF3</id>
        <label>Tiam2</label>
    </interactant>
    <organismsDiffer>true</organismsDiffer>
    <experiments>2</experiments>
</comment>
<comment type="interaction">
    <interactant intactId="EBI-9118204">
        <id>Q8TEW0-2</id>
    </interactant>
    <interactant intactId="EBI-7565978">
        <id>Q6ZPF3</id>
        <label>Tiam2</label>
    </interactant>
    <organismsDiffer>true</organismsDiffer>
    <experiments>6</experiments>
</comment>
<comment type="subcellular location">
    <subcellularLocation>
        <location evidence="1">Cytoplasm</location>
    </subcellularLocation>
    <subcellularLocation>
        <location evidence="15">Endomembrane system</location>
    </subcellularLocation>
    <subcellularLocation>
        <location evidence="15 19">Cell junction</location>
    </subcellularLocation>
    <subcellularLocation>
        <location evidence="15 19">Cell junction</location>
        <location evidence="15 19">Tight junction</location>
    </subcellularLocation>
    <subcellularLocation>
        <location evidence="2">Cell junction</location>
        <location evidence="2">Adherens junction</location>
    </subcellularLocation>
    <subcellularLocation>
        <location evidence="15 19">Cell membrane</location>
    </subcellularLocation>
    <subcellularLocation>
        <location evidence="1">Cytoplasm</location>
        <location evidence="1">Cell cortex</location>
    </subcellularLocation>
    <subcellularLocation>
        <location evidence="15">Cytoplasm</location>
        <location evidence="15">Cytoskeleton</location>
    </subcellularLocation>
    <text evidence="1">Localized along the cell-cell contact region. Colocalizes with PARD6A and PRKCI at epithelial tight junctions. Colocalizes with the cortical actin that overlays the meiotic spindle during metaphase I and metaphase II. Colocalized with SIRT2 in internode region of myelin sheath (By similarity). Presence of KRIT1, CDH5 and RAP1B is required for its localization to the cell junction.</text>
</comment>
<comment type="alternative products">
    <event type="alternative splicing"/>
    <isoform>
        <id>Q8TEW0-1</id>
        <name>1</name>
        <name>A</name>
        <sequence type="displayed"/>
    </isoform>
    <isoform>
        <id>Q8TEW0-2</id>
        <name>2</name>
        <name>B</name>
        <name>La</name>
        <sequence type="described" ref="VSP_007464"/>
    </isoform>
    <isoform>
        <id>Q8TEW0-3</id>
        <name>3</name>
        <name>C</name>
        <sequence type="described" ref="VSP_007462 VSP_007463 VSP_007464 VSP_007465"/>
    </isoform>
    <isoform>
        <id>Q8TEW0-4</id>
        <name>4</name>
        <name>D</name>
        <sequence type="described" ref="VSP_007469"/>
    </isoform>
    <isoform>
        <id>Q8TEW0-5</id>
        <name>5</name>
        <name>E</name>
        <sequence type="described" ref="VSP_007462 VSP_007463 VSP_007464 VSP_007466 VSP_007468 VSP_007469"/>
    </isoform>
    <isoform>
        <id>Q8TEW0-6</id>
        <name>6</name>
        <name>F</name>
        <sequence type="described" ref="VSP_007463 VSP_007464 VSP_007465"/>
    </isoform>
    <isoform>
        <id>Q8TEW0-7</id>
        <name>7</name>
        <name>Lb</name>
        <sequence type="described" ref="VSP_007463 VSP_007464 VSP_007465 VSP_007469"/>
    </isoform>
    <isoform>
        <id>Q8TEW0-8</id>
        <name>8</name>
        <name>Sa</name>
        <sequence type="described" ref="VSP_007464 VSP_007470 VSP_007471"/>
    </isoform>
    <isoform>
        <id>Q8TEW0-9</id>
        <name>9</name>
        <name>Sb</name>
        <sequence type="described" ref="VSP_007463 VSP_007464 VSP_007465 VSP_007470 VSP_007471"/>
    </isoform>
    <isoform>
        <id>Q8TEW0-10</id>
        <name>10</name>
        <sequence type="described" ref="VSP_007464 VSP_007465 VSP_007467 VSP_007470 VSP_007471"/>
    </isoform>
    <isoform>
        <id>Q8TEW0-11</id>
        <name>11</name>
        <sequence type="described" ref="VSP_007463 VSP_007464"/>
    </isoform>
</comment>
<comment type="tissue specificity">
    <text evidence="10">Widely expressed.</text>
</comment>
<comment type="domain">
    <text evidence="1">Contains a conserved N-terminal oligomerization domain (NTD) that is involved in oligomerization and is essential for proper subapical membrane localization.</text>
</comment>
<comment type="domain">
    <text evidence="1">The second PDZ domain mediates interaction with membranes containing phosphoinositol lipids.</text>
</comment>
<comment type="PTM">
    <text evidence="16">Acetylated. Deacetylated by SIRT2, thereby inhibiting Schwann cell peripheral myelination.</text>
</comment>
<comment type="PTM">
    <text evidence="1 14">Phosphorylation at Ser-827 by PRKCZ and PRKCI occurs at the most apical tip of epithelial cell-cell contacts during the initial phase of tight junction formation and may promote dissociation of the complex with PARD6. EGF-induced Tyr-1127 phosphorylation mediates dissociation from LIMK2 (By similarity). Phosphorylation by AURKA at Ser-962 is required for the normal establishment of neuronal polarity (PubMed:19812038).</text>
</comment>
<comment type="disease" evidence="19">
    <disease id="DI-02042">
        <name>Neural tube defects</name>
        <acronym>NTD</acronym>
        <description>Congenital malformations of the central nervous system and adjacent structures related to defective neural tube closure during the first trimester of pregnancy. Failure of neural tube closure can occur at any level of the embryonic axis. Common NTD forms include anencephaly, myelomeningocele and spina bifida, which result from the failure of fusion in the cranial and spinal region of the neural tube. NTDs have a multifactorial etiology encompassing both genetic and environmental components.</description>
        <dbReference type="MIM" id="182940"/>
    </disease>
    <text>Disease susceptibility is associated with variants affecting the gene represented in this entry.</text>
</comment>
<comment type="miscellaneous">
    <text>Antibodies against PARD3 are present in sera from patients with cutaneous T-cell lymphomas.</text>
</comment>
<comment type="similarity">
    <text evidence="26">Belongs to the PAR3 family.</text>
</comment>
<comment type="sequence caution" evidence="26">
    <conflict type="miscellaneous discrepancy">
        <sequence resource="EMBL-CDS" id="AAG33676"/>
    </conflict>
    <text>Contaminating sequence. Potential poly-A sequence.</text>
</comment>
<comment type="sequence caution" evidence="26">
    <conflict type="erroneous initiation">
        <sequence resource="EMBL-CDS" id="BAA91366"/>
    </conflict>
    <text>Truncated N-terminus.</text>
</comment>
<comment type="sequence caution" evidence="26">
    <conflict type="erroneous initiation">
        <sequence resource="EMBL-CDS" id="BAB55330"/>
    </conflict>
    <text>Truncated N-terminus.</text>
</comment>
<reference key="1">
    <citation type="journal article" date="2000" name="Nat. Cell Biol.">
        <title>The cell-polarity protein Par6 links Par3 and atypical protein kinase C to Cdc42.</title>
        <authorList>
            <person name="Joberty G."/>
            <person name="Petersen C."/>
            <person name="Gao L."/>
            <person name="Macara I.G."/>
        </authorList>
    </citation>
    <scope>NUCLEOTIDE SEQUENCE [MRNA] (ISOFORM 3)</scope>
    <scope>FUNCTION</scope>
    <scope>INTERACTION WITH PARD6B</scope>
    <source>
        <tissue>Kidney</tissue>
    </source>
</reference>
<reference key="2">
    <citation type="journal article" date="2001" name="Cell Res.">
        <title>Down-regulated expression of atypical PKC-binding domain deleted asip isoforms in human hepatocellular carcinomas.</title>
        <authorList>
            <person name="Fang C.M."/>
            <person name="Xu Y.H."/>
        </authorList>
    </citation>
    <scope>NUCLEOTIDE SEQUENCE [MRNA] (ISOFORMS 2; 3; 7; 8 AND 9)</scope>
</reference>
<reference key="3">
    <citation type="journal article" date="2002" name="Biochem. Biophys. Res. Commun.">
        <title>PAR3beta, a novel homologue of the cell polarity protein PAR3, localizes to tight junctions.</title>
        <authorList>
            <person name="Kohjima M."/>
            <person name="Noda Y."/>
            <person name="Takeya R."/>
            <person name="Saito N."/>
            <person name="Takeuchi K."/>
            <person name="Sumimoto H."/>
        </authorList>
    </citation>
    <scope>NUCLEOTIDE SEQUENCE [MRNA] (ISOFORM 5)</scope>
</reference>
<reference key="4">
    <citation type="journal article" date="2002" name="Gene">
        <title>Multiple splice variants of Par3 and of a novel related gene, Par3L, produce proteins with different binding properties.</title>
        <authorList>
            <person name="Gao L."/>
            <person name="Macara I.G."/>
            <person name="Joberty G."/>
        </authorList>
    </citation>
    <scope>NUCLEOTIDE SEQUENCE [MRNA] (ISOFORMS 1; 2; 3; 4; 5 AND 6)</scope>
    <scope>INTERACTION WITH PARD6B AND PRKCZ</scope>
    <scope>TISSUE SPECIFICITY</scope>
</reference>
<reference key="5">
    <citation type="journal article" date="2004" name="Nature">
        <title>The DNA sequence and comparative analysis of human chromosome 10.</title>
        <authorList>
            <person name="Deloukas P."/>
            <person name="Earthrowl M.E."/>
            <person name="Grafham D.V."/>
            <person name="Rubenfield M."/>
            <person name="French L."/>
            <person name="Steward C.A."/>
            <person name="Sims S.K."/>
            <person name="Jones M.C."/>
            <person name="Searle S."/>
            <person name="Scott C."/>
            <person name="Howe K."/>
            <person name="Hunt S.E."/>
            <person name="Andrews T.D."/>
            <person name="Gilbert J.G.R."/>
            <person name="Swarbreck D."/>
            <person name="Ashurst J.L."/>
            <person name="Taylor A."/>
            <person name="Battles J."/>
            <person name="Bird C.P."/>
            <person name="Ainscough R."/>
            <person name="Almeida J.P."/>
            <person name="Ashwell R.I.S."/>
            <person name="Ambrose K.D."/>
            <person name="Babbage A.K."/>
            <person name="Bagguley C.L."/>
            <person name="Bailey J."/>
            <person name="Banerjee R."/>
            <person name="Bates K."/>
            <person name="Beasley H."/>
            <person name="Bray-Allen S."/>
            <person name="Brown A.J."/>
            <person name="Brown J.Y."/>
            <person name="Burford D.C."/>
            <person name="Burrill W."/>
            <person name="Burton J."/>
            <person name="Cahill P."/>
            <person name="Camire D."/>
            <person name="Carter N.P."/>
            <person name="Chapman J.C."/>
            <person name="Clark S.Y."/>
            <person name="Clarke G."/>
            <person name="Clee C.M."/>
            <person name="Clegg S."/>
            <person name="Corby N."/>
            <person name="Coulson A."/>
            <person name="Dhami P."/>
            <person name="Dutta I."/>
            <person name="Dunn M."/>
            <person name="Faulkner L."/>
            <person name="Frankish A."/>
            <person name="Frankland J.A."/>
            <person name="Garner P."/>
            <person name="Garnett J."/>
            <person name="Gribble S."/>
            <person name="Griffiths C."/>
            <person name="Grocock R."/>
            <person name="Gustafson E."/>
            <person name="Hammond S."/>
            <person name="Harley J.L."/>
            <person name="Hart E."/>
            <person name="Heath P.D."/>
            <person name="Ho T.P."/>
            <person name="Hopkins B."/>
            <person name="Horne J."/>
            <person name="Howden P.J."/>
            <person name="Huckle E."/>
            <person name="Hynds C."/>
            <person name="Johnson C."/>
            <person name="Johnson D."/>
            <person name="Kana A."/>
            <person name="Kay M."/>
            <person name="Kimberley A.M."/>
            <person name="Kershaw J.K."/>
            <person name="Kokkinaki M."/>
            <person name="Laird G.K."/>
            <person name="Lawlor S."/>
            <person name="Lee H.M."/>
            <person name="Leongamornlert D.A."/>
            <person name="Laird G."/>
            <person name="Lloyd C."/>
            <person name="Lloyd D.M."/>
            <person name="Loveland J."/>
            <person name="Lovell J."/>
            <person name="McLaren S."/>
            <person name="McLay K.E."/>
            <person name="McMurray A."/>
            <person name="Mashreghi-Mohammadi M."/>
            <person name="Matthews L."/>
            <person name="Milne S."/>
            <person name="Nickerson T."/>
            <person name="Nguyen M."/>
            <person name="Overton-Larty E."/>
            <person name="Palmer S.A."/>
            <person name="Pearce A.V."/>
            <person name="Peck A.I."/>
            <person name="Pelan S."/>
            <person name="Phillimore B."/>
            <person name="Porter K."/>
            <person name="Rice C.M."/>
            <person name="Rogosin A."/>
            <person name="Ross M.T."/>
            <person name="Sarafidou T."/>
            <person name="Sehra H.K."/>
            <person name="Shownkeen R."/>
            <person name="Skuce C.D."/>
            <person name="Smith M."/>
            <person name="Standring L."/>
            <person name="Sycamore N."/>
            <person name="Tester J."/>
            <person name="Thorpe A."/>
            <person name="Torcasso W."/>
            <person name="Tracey A."/>
            <person name="Tromans A."/>
            <person name="Tsolas J."/>
            <person name="Wall M."/>
            <person name="Walsh J."/>
            <person name="Wang H."/>
            <person name="Weinstock K."/>
            <person name="West A.P."/>
            <person name="Willey D.L."/>
            <person name="Whitehead S.L."/>
            <person name="Wilming L."/>
            <person name="Wray P.W."/>
            <person name="Young L."/>
            <person name="Chen Y."/>
            <person name="Lovering R.C."/>
            <person name="Moschonas N.K."/>
            <person name="Siebert R."/>
            <person name="Fechtel K."/>
            <person name="Bentley D."/>
            <person name="Durbin R.M."/>
            <person name="Hubbard T."/>
            <person name="Doucette-Stamm L."/>
            <person name="Beck S."/>
            <person name="Smith D.R."/>
            <person name="Rogers J."/>
        </authorList>
    </citation>
    <scope>NUCLEOTIDE SEQUENCE [LARGE SCALE GENOMIC DNA]</scope>
</reference>
<reference key="6">
    <citation type="submission" date="2005-09" db="EMBL/GenBank/DDBJ databases">
        <authorList>
            <person name="Mural R.J."/>
            <person name="Istrail S."/>
            <person name="Sutton G.G."/>
            <person name="Florea L."/>
            <person name="Halpern A.L."/>
            <person name="Mobarry C.M."/>
            <person name="Lippert R."/>
            <person name="Walenz B."/>
            <person name="Shatkay H."/>
            <person name="Dew I."/>
            <person name="Miller J.R."/>
            <person name="Flanigan M.J."/>
            <person name="Edwards N.J."/>
            <person name="Bolanos R."/>
            <person name="Fasulo D."/>
            <person name="Halldorsson B.V."/>
            <person name="Hannenhalli S."/>
            <person name="Turner R."/>
            <person name="Yooseph S."/>
            <person name="Lu F."/>
            <person name="Nusskern D.R."/>
            <person name="Shue B.C."/>
            <person name="Zheng X.H."/>
            <person name="Zhong F."/>
            <person name="Delcher A.L."/>
            <person name="Huson D.H."/>
            <person name="Kravitz S.A."/>
            <person name="Mouchard L."/>
            <person name="Reinert K."/>
            <person name="Remington K.A."/>
            <person name="Clark A.G."/>
            <person name="Waterman M.S."/>
            <person name="Eichler E.E."/>
            <person name="Adams M.D."/>
            <person name="Hunkapiller M.W."/>
            <person name="Myers E.W."/>
            <person name="Venter J.C."/>
        </authorList>
    </citation>
    <scope>NUCLEOTIDE SEQUENCE [LARGE SCALE GENOMIC DNA]</scope>
</reference>
<reference key="7">
    <citation type="journal article" date="2004" name="Genome Res.">
        <title>The status, quality, and expansion of the NIH full-length cDNA project: the Mammalian Gene Collection (MGC).</title>
        <authorList>
            <consortium name="The MGC Project Team"/>
        </authorList>
    </citation>
    <scope>NUCLEOTIDE SEQUENCE [LARGE SCALE MRNA] (ISOFORM 11)</scope>
    <scope>NUCLEOTIDE SEQUENCE [LARGE SCALE MRNA] OF 860-1356 (ISOFORM 1)</scope>
    <source>
        <tissue>Lung</tissue>
        <tissue>Placenta</tissue>
    </source>
</reference>
<reference key="8">
    <citation type="journal article" date="2004" name="Nat. Genet.">
        <title>Complete sequencing and characterization of 21,243 full-length human cDNAs.</title>
        <authorList>
            <person name="Ota T."/>
            <person name="Suzuki Y."/>
            <person name="Nishikawa T."/>
            <person name="Otsuki T."/>
            <person name="Sugiyama T."/>
            <person name="Irie R."/>
            <person name="Wakamatsu A."/>
            <person name="Hayashi K."/>
            <person name="Sato H."/>
            <person name="Nagai K."/>
            <person name="Kimura K."/>
            <person name="Makita H."/>
            <person name="Sekine M."/>
            <person name="Obayashi M."/>
            <person name="Nishi T."/>
            <person name="Shibahara T."/>
            <person name="Tanaka T."/>
            <person name="Ishii S."/>
            <person name="Yamamoto J."/>
            <person name="Saito K."/>
            <person name="Kawai Y."/>
            <person name="Isono Y."/>
            <person name="Nakamura Y."/>
            <person name="Nagahari K."/>
            <person name="Murakami K."/>
            <person name="Yasuda T."/>
            <person name="Iwayanagi T."/>
            <person name="Wagatsuma M."/>
            <person name="Shiratori A."/>
            <person name="Sudo H."/>
            <person name="Hosoiri T."/>
            <person name="Kaku Y."/>
            <person name="Kodaira H."/>
            <person name="Kondo H."/>
            <person name="Sugawara M."/>
            <person name="Takahashi M."/>
            <person name="Kanda K."/>
            <person name="Yokoi T."/>
            <person name="Furuya T."/>
            <person name="Kikkawa E."/>
            <person name="Omura Y."/>
            <person name="Abe K."/>
            <person name="Kamihara K."/>
            <person name="Katsuta N."/>
            <person name="Sato K."/>
            <person name="Tanikawa M."/>
            <person name="Yamazaki M."/>
            <person name="Ninomiya K."/>
            <person name="Ishibashi T."/>
            <person name="Yamashita H."/>
            <person name="Murakawa K."/>
            <person name="Fujimori K."/>
            <person name="Tanai H."/>
            <person name="Kimata M."/>
            <person name="Watanabe M."/>
            <person name="Hiraoka S."/>
            <person name="Chiba Y."/>
            <person name="Ishida S."/>
            <person name="Ono Y."/>
            <person name="Takiguchi S."/>
            <person name="Watanabe S."/>
            <person name="Yosida M."/>
            <person name="Hotuta T."/>
            <person name="Kusano J."/>
            <person name="Kanehori K."/>
            <person name="Takahashi-Fujii A."/>
            <person name="Hara H."/>
            <person name="Tanase T.-O."/>
            <person name="Nomura Y."/>
            <person name="Togiya S."/>
            <person name="Komai F."/>
            <person name="Hara R."/>
            <person name="Takeuchi K."/>
            <person name="Arita M."/>
            <person name="Imose N."/>
            <person name="Musashino K."/>
            <person name="Yuuki H."/>
            <person name="Oshima A."/>
            <person name="Sasaki N."/>
            <person name="Aotsuka S."/>
            <person name="Yoshikawa Y."/>
            <person name="Matsunawa H."/>
            <person name="Ichihara T."/>
            <person name="Shiohata N."/>
            <person name="Sano S."/>
            <person name="Moriya S."/>
            <person name="Momiyama H."/>
            <person name="Satoh N."/>
            <person name="Takami S."/>
            <person name="Terashima Y."/>
            <person name="Suzuki O."/>
            <person name="Nakagawa S."/>
            <person name="Senoh A."/>
            <person name="Mizoguchi H."/>
            <person name="Goto Y."/>
            <person name="Shimizu F."/>
            <person name="Wakebe H."/>
            <person name="Hishigaki H."/>
            <person name="Watanabe T."/>
            <person name="Sugiyama A."/>
            <person name="Takemoto M."/>
            <person name="Kawakami B."/>
            <person name="Yamazaki M."/>
            <person name="Watanabe K."/>
            <person name="Kumagai A."/>
            <person name="Itakura S."/>
            <person name="Fukuzumi Y."/>
            <person name="Fujimori Y."/>
            <person name="Komiyama M."/>
            <person name="Tashiro H."/>
            <person name="Tanigami A."/>
            <person name="Fujiwara T."/>
            <person name="Ono T."/>
            <person name="Yamada K."/>
            <person name="Fujii Y."/>
            <person name="Ozaki K."/>
            <person name="Hirao M."/>
            <person name="Ohmori Y."/>
            <person name="Kawabata A."/>
            <person name="Hikiji T."/>
            <person name="Kobatake N."/>
            <person name="Inagaki H."/>
            <person name="Ikema Y."/>
            <person name="Okamoto S."/>
            <person name="Okitani R."/>
            <person name="Kawakami T."/>
            <person name="Noguchi S."/>
            <person name="Itoh T."/>
            <person name="Shigeta K."/>
            <person name="Senba T."/>
            <person name="Matsumura K."/>
            <person name="Nakajima Y."/>
            <person name="Mizuno T."/>
            <person name="Morinaga M."/>
            <person name="Sasaki M."/>
            <person name="Togashi T."/>
            <person name="Oyama M."/>
            <person name="Hata H."/>
            <person name="Watanabe M."/>
            <person name="Komatsu T."/>
            <person name="Mizushima-Sugano J."/>
            <person name="Satoh T."/>
            <person name="Shirai Y."/>
            <person name="Takahashi Y."/>
            <person name="Nakagawa K."/>
            <person name="Okumura K."/>
            <person name="Nagase T."/>
            <person name="Nomura N."/>
            <person name="Kikuchi H."/>
            <person name="Masuho Y."/>
            <person name="Yamashita R."/>
            <person name="Nakai K."/>
            <person name="Yada T."/>
            <person name="Nakamura Y."/>
            <person name="Ohara O."/>
            <person name="Isogai T."/>
            <person name="Sugano S."/>
        </authorList>
    </citation>
    <scope>NUCLEOTIDE SEQUENCE [LARGE SCALE MRNA] OF 955-1356 (ISOFORM 6)</scope>
    <scope>NUCLEOTIDE SEQUENCE [LARGE SCALE MRNA] OF 126-1356 (ISOFORM 10)</scope>
    <source>
        <tissue>Hepatoma</tissue>
        <tissue>Ovarian carcinoma</tissue>
    </source>
</reference>
<reference key="9">
    <citation type="journal article" date="2001" name="Proc. Natl. Acad. Sci. U.S.A.">
        <title>Serological detection of cutaneous T-cell lymphoma-associated antigens.</title>
        <authorList>
            <person name="Eichmueller S."/>
            <person name="Usener D."/>
            <person name="Dummer R."/>
            <person name="Stein A."/>
            <person name="Thiel D."/>
            <person name="Schadendorf D."/>
        </authorList>
    </citation>
    <scope>NUCLEOTIDE SEQUENCE [MRNA] OF 313-992</scope>
    <source>
        <tissue>Testis</tissue>
    </source>
</reference>
<reference key="10">
    <citation type="journal article" date="2000" name="J. Cell Sci.">
        <title>The mammalian homologue of the Caenorhabditis elegans polarity protein PAR-6 is a binding partner for the Rho GTPases Cdc42 and Rac1.</title>
        <authorList>
            <person name="Johansson A.-S."/>
            <person name="Driessens M."/>
            <person name="Aspenstroem P."/>
        </authorList>
    </citation>
    <scope>FUNCTION</scope>
    <scope>INTERACTION WITH PARD6A</scope>
</reference>
<reference key="11">
    <citation type="journal article" date="2001" name="J. Cell Biol.">
        <title>Atypical protein kinase C is involved in the evolutionarily conserved par protein complex and plays a critical role in establishing epithelia-specific junctional structures.</title>
        <authorList>
            <person name="Suzuki A."/>
            <person name="Yamanaka T."/>
            <person name="Hirose T."/>
            <person name="Manabe N."/>
            <person name="Mizuno K."/>
            <person name="Shimizu M."/>
            <person name="Akimoto K."/>
            <person name="Izumi Y."/>
            <person name="Ohnishi T."/>
            <person name="Ohno S."/>
        </authorList>
    </citation>
    <scope>SUBUNIT OF A COMPLEX CONTAINING PARD6B AND PRKCI</scope>
    <source>
        <tissue>Kidney</tissue>
    </source>
</reference>
<reference key="12">
    <citation type="journal article" date="2004" name="Anal. Chem.">
        <title>Robust phosphoproteomic profiling of tyrosine phosphorylation sites from human T cells using immobilized metal affinity chromatography and tandem mass spectrometry.</title>
        <authorList>
            <person name="Brill L.M."/>
            <person name="Salomon A.R."/>
            <person name="Ficarro S.B."/>
            <person name="Mukherji M."/>
            <person name="Stettler-Gill M."/>
            <person name="Peters E.C."/>
        </authorList>
    </citation>
    <scope>IDENTIFICATION BY MASS SPECTROMETRY [LARGE SCALE ANALYSIS]</scope>
    <source>
        <tissue>Leukemic T-cell</tissue>
    </source>
</reference>
<reference key="13">
    <citation type="journal article" date="2004" name="Mol. Cell. Biol.">
        <title>Nucleotide exchange factor ECT2 interacts with the polarity protein complex Par6/Par3/protein kinase Czeta (PKCzeta) and regulates PKCzeta activity.</title>
        <authorList>
            <person name="Liu X.F."/>
            <person name="Ishida H."/>
            <person name="Raziuddin R."/>
            <person name="Miki T."/>
        </authorList>
    </citation>
    <scope>INTERACTION WITH ECT2</scope>
</reference>
<reference key="14">
    <citation type="journal article" date="2006" name="Cell">
        <title>A Rich1/Amot complex regulates the Cdc42 GTPase and apical-polarity proteins in epithelial cells.</title>
        <authorList>
            <person name="Wells C.D."/>
            <person name="Fawcett J.P."/>
            <person name="Traweger A."/>
            <person name="Yamanaka Y."/>
            <person name="Goudreault M."/>
            <person name="Elder K."/>
            <person name="Kulkarni S."/>
            <person name="Gish G."/>
            <person name="Virag C."/>
            <person name="Lim C."/>
            <person name="Colwill K."/>
            <person name="Starostine A."/>
            <person name="Metalnikov P."/>
            <person name="Pawson T."/>
        </authorList>
    </citation>
    <scope>IDENTIFICATION BY MASS SPECTROMETRY</scope>
    <scope>IDENTIFICATION IN A COMPLEX WITH ARHGAP17; AMOT; PALS1 AND PATJ</scope>
</reference>
<reference key="15">
    <citation type="journal article" date="2008" name="J. Cell Biol.">
        <title>The keratin-binding protein Albatross regulates polarization of epithelial cells.</title>
        <authorList>
            <person name="Sugimoto M."/>
            <person name="Inoko A."/>
            <person name="Shiromizu T."/>
            <person name="Nakayama M."/>
            <person name="Zou P."/>
            <person name="Yonemura S."/>
            <person name="Hayashi Y."/>
            <person name="Izawa I."/>
            <person name="Sasoh M."/>
            <person name="Uji Y."/>
            <person name="Kaibuchi K."/>
            <person name="Kiyono T."/>
            <person name="Inagaki M."/>
        </authorList>
    </citation>
    <scope>INTERACTION WITH FBF1</scope>
</reference>
<reference key="16">
    <citation type="journal article" date="2008" name="J. Proteome Res.">
        <title>Combining protein-based IMAC, peptide-based IMAC, and MudPIT for efficient phosphoproteomic analysis.</title>
        <authorList>
            <person name="Cantin G.T."/>
            <person name="Yi W."/>
            <person name="Lu B."/>
            <person name="Park S.K."/>
            <person name="Xu T."/>
            <person name="Lee J.-D."/>
            <person name="Yates J.R. III"/>
        </authorList>
    </citation>
    <scope>PHOSPHORYLATION [LARGE SCALE ANALYSIS] AT SER-383 AND SER-695</scope>
    <scope>IDENTIFICATION BY MASS SPECTROMETRY [LARGE SCALE ANALYSIS]</scope>
    <source>
        <tissue>Cervix carcinoma</tissue>
    </source>
</reference>
<reference key="17">
    <citation type="journal article" date="2008" name="Proc. Natl. Acad. Sci. U.S.A.">
        <title>A quantitative atlas of mitotic phosphorylation.</title>
        <authorList>
            <person name="Dephoure N."/>
            <person name="Zhou C."/>
            <person name="Villen J."/>
            <person name="Beausoleil S.A."/>
            <person name="Bakalarski C.E."/>
            <person name="Elledge S.J."/>
            <person name="Gygi S.P."/>
        </authorList>
    </citation>
    <scope>PHOSPHORYLATION [LARGE SCALE ANALYSIS] AT SER-383; SER-692; SER-695; SER-728; SER-809; SER-852 AND SER-873</scope>
    <scope>IDENTIFICATION BY MASS SPECTROMETRY [LARGE SCALE ANALYSIS]</scope>
    <source>
        <tissue>Cervix carcinoma</tissue>
    </source>
</reference>
<reference key="18">
    <citation type="journal article" date="2009" name="J. Biol. Chem.">
        <title>Phosphorylation of the par polarity complex protein Par3 at serine 962 is mediated by aurora A and regulates its function in neuronal polarity.</title>
        <authorList>
            <person name="Khazaei M.R."/>
            <person name="Puschel A.W."/>
        </authorList>
    </citation>
    <scope>INTERACTION WITH AURKA AND AURKB</scope>
    <scope>FUNCTION</scope>
    <scope>MUTAGENESIS OF SER-962</scope>
    <scope>PHOSPHORYLATION AT SER-962</scope>
</reference>
<reference key="19">
    <citation type="journal article" date="2009" name="Sci. Signal.">
        <title>Quantitative phosphoproteomic analysis of T cell receptor signaling reveals system-wide modulation of protein-protein interactions.</title>
        <authorList>
            <person name="Mayya V."/>
            <person name="Lundgren D.H."/>
            <person name="Hwang S.-I."/>
            <person name="Rezaul K."/>
            <person name="Wu L."/>
            <person name="Eng J.K."/>
            <person name="Rodionov V."/>
            <person name="Han D.K."/>
        </authorList>
    </citation>
    <scope>PHOSPHORYLATION [LARGE SCALE ANALYSIS] AT SER-383; SER-728 AND SER-852</scope>
    <scope>IDENTIFICATION BY MASS SPECTROMETRY [LARGE SCALE ANALYSIS]</scope>
    <source>
        <tissue>Leukemic T-cell</tissue>
    </source>
</reference>
<reference key="20">
    <citation type="journal article" date="2010" name="J. Cell Sci.">
        <title>CCM1 regulates vascular-lumen organization by inducing endothelial polarity.</title>
        <authorList>
            <person name="Lampugnani M.G."/>
            <person name="Orsenigo F."/>
            <person name="Rudini N."/>
            <person name="Maddaluno L."/>
            <person name="Boulday G."/>
            <person name="Chapon F."/>
            <person name="Dejana E."/>
        </authorList>
    </citation>
    <scope>SUBCELLULAR LOCATION</scope>
    <scope>SUBUNIT</scope>
</reference>
<reference key="21">
    <citation type="journal article" date="2010" name="Sci. Signal.">
        <title>Quantitative phosphoproteomics reveals widespread full phosphorylation site occupancy during mitosis.</title>
        <authorList>
            <person name="Olsen J.V."/>
            <person name="Vermeulen M."/>
            <person name="Santamaria A."/>
            <person name="Kumar C."/>
            <person name="Miller M.L."/>
            <person name="Jensen L.J."/>
            <person name="Gnad F."/>
            <person name="Cox J."/>
            <person name="Jensen T.S."/>
            <person name="Nigg E.A."/>
            <person name="Brunak S."/>
            <person name="Mann M."/>
        </authorList>
    </citation>
    <scope>PHOSPHORYLATION [LARGE SCALE ANALYSIS] AT SER-383; SER-728; SER-852 AND SER-873</scope>
    <scope>IDENTIFICATION BY MASS SPECTROMETRY [LARGE SCALE ANALYSIS]</scope>
    <source>
        <tissue>Cervix carcinoma</tissue>
    </source>
</reference>
<reference key="22">
    <citation type="journal article" date="2011" name="BMC Syst. Biol.">
        <title>Initial characterization of the human central proteome.</title>
        <authorList>
            <person name="Burkard T.R."/>
            <person name="Planyavsky M."/>
            <person name="Kaupe I."/>
            <person name="Breitwieser F.P."/>
            <person name="Buerckstuemmer T."/>
            <person name="Bennett K.L."/>
            <person name="Superti-Furga G."/>
            <person name="Colinge J."/>
        </authorList>
    </citation>
    <scope>IDENTIFICATION BY MASS SPECTROMETRY [LARGE SCALE ANALYSIS]</scope>
</reference>
<reference key="23">
    <citation type="journal article" date="2011" name="Proc. Natl. Acad. Sci. U.S.A.">
        <title>Sir-two-homolog 2 (Sirt2) modulates peripheral myelination through polarity protein Par-3/atypical protein kinase C (aPKC) signaling.</title>
        <authorList>
            <person name="Beirowski B."/>
            <person name="Gustin J."/>
            <person name="Armour S.M."/>
            <person name="Yamamoto H."/>
            <person name="Viader A."/>
            <person name="North B.J."/>
            <person name="Michan S."/>
            <person name="Baloh R.H."/>
            <person name="Golden J.P."/>
            <person name="Schmidt R.E."/>
            <person name="Sinclair D.A."/>
            <person name="Auwerx J."/>
            <person name="Milbrandt J."/>
        </authorList>
    </citation>
    <scope>ACETYLATION</scope>
    <scope>DEACETYLATION BY SIRT2</scope>
    <scope>INTERACTION WITH SIRT2</scope>
</reference>
<reference key="24">
    <citation type="journal article" date="2011" name="Sci. Signal.">
        <title>System-wide temporal characterization of the proteome and phosphoproteome of human embryonic stem cell differentiation.</title>
        <authorList>
            <person name="Rigbolt K.T."/>
            <person name="Prokhorova T.A."/>
            <person name="Akimov V."/>
            <person name="Henningsen J."/>
            <person name="Johansen P.T."/>
            <person name="Kratchmarova I."/>
            <person name="Kassem M."/>
            <person name="Mann M."/>
            <person name="Olsen J.V."/>
            <person name="Blagoev B."/>
        </authorList>
    </citation>
    <scope>PHOSPHORYLATION [LARGE SCALE ANALYSIS] AT SER-383; SER-852 AND SER-873</scope>
    <scope>IDENTIFICATION BY MASS SPECTROMETRY [LARGE SCALE ANALYSIS]</scope>
</reference>
<reference key="25">
    <citation type="journal article" date="2013" name="Acta Crystallogr. F">
        <title>High-resolution structure of the Tiam1 PHn-CC-Ex domain.</title>
        <authorList>
            <person name="Joshi M."/>
            <person name="Gakhar L."/>
            <person name="Fuentes E.J."/>
        </authorList>
    </citation>
    <scope>INTERACTION WITH TIAM1</scope>
</reference>
<reference key="26">
    <citation type="journal article" date="2013" name="J. Proteome Res.">
        <title>Toward a comprehensive characterization of a human cancer cell phosphoproteome.</title>
        <authorList>
            <person name="Zhou H."/>
            <person name="Di Palma S."/>
            <person name="Preisinger C."/>
            <person name="Peng M."/>
            <person name="Polat A.N."/>
            <person name="Heck A.J."/>
            <person name="Mohammed S."/>
        </authorList>
    </citation>
    <scope>PHOSPHORYLATION [LARGE SCALE ANALYSIS] AT SER-174; SER-383; SER-692; SER-695; SER-715; SER-728; SER-827; SER-837; SER-852; SER-873; SER-962; SER-971; SER-973 AND SER-1046</scope>
    <scope>IDENTIFICATION BY MASS SPECTROMETRY [LARGE SCALE ANALYSIS]</scope>
    <source>
        <tissue>Cervix carcinoma</tissue>
        <tissue>Erythroleukemia</tissue>
    </source>
</reference>
<reference key="27">
    <citation type="journal article" date="2014" name="J. Proteomics">
        <title>An enzyme assisted RP-RPLC approach for in-depth analysis of human liver phosphoproteome.</title>
        <authorList>
            <person name="Bian Y."/>
            <person name="Song C."/>
            <person name="Cheng K."/>
            <person name="Dong M."/>
            <person name="Wang F."/>
            <person name="Huang J."/>
            <person name="Sun D."/>
            <person name="Wang L."/>
            <person name="Ye M."/>
            <person name="Zou H."/>
        </authorList>
    </citation>
    <scope>PHOSPHORYLATION [LARGE SCALE ANALYSIS] AT SER-25; THR-91; SER-383 AND TYR-489</scope>
    <scope>PHOSPHORYLATION [LARGE SCALE ANALYSIS] AT SER-792 (ISOFORM 5)</scope>
    <scope>IDENTIFICATION BY MASS SPECTROMETRY [LARGE SCALE ANALYSIS]</scope>
    <source>
        <tissue>Liver</tissue>
    </source>
</reference>
<reference key="28">
    <citation type="journal article" date="2016" name="Dev. Cell">
        <title>SAPCD2 controls spindle orientation and asymmetric divisions by negatively regulating the Galphai-LGN-NuMA ternary complex.</title>
        <authorList>
            <person name="Chiu C.W."/>
            <person name="Monat C."/>
            <person name="Robitaille M."/>
            <person name="Lacomme M."/>
            <person name="Daulat A.M."/>
            <person name="Macleod G."/>
            <person name="McNeill H."/>
            <person name="Cayouette M."/>
            <person name="Angers S."/>
        </authorList>
    </citation>
    <scope>INTERACTION WITH SAPCD2</scope>
</reference>
<reference key="29">
    <citation type="journal article" date="2017" name="Hum. Mutat.">
        <title>Rare deleterious PARD3 variants in the aPKC-binding region are implicated in the pathogenesis of human cranial neural tube defects via disrupting apical tight junction formation.</title>
        <authorList>
            <person name="Chen X."/>
            <person name="An Y."/>
            <person name="Gao Y."/>
            <person name="Guo L."/>
            <person name="Rui L."/>
            <person name="Xie H."/>
            <person name="Sun M."/>
            <person name="Lam Hung S."/>
            <person name="Sheng X."/>
            <person name="Zou J."/>
            <person name="Bao Y."/>
            <person name="Guan H."/>
            <person name="Niu B."/>
            <person name="Li Z."/>
            <person name="Finnell R.H."/>
            <person name="Gusella J.F."/>
            <person name="Wu B.L."/>
            <person name="Zhang T."/>
        </authorList>
    </citation>
    <scope>FUNCTION</scope>
    <scope>INTERACTION WITH PRKCA</scope>
    <scope>SUBCELLULAR LOCATION</scope>
    <scope>INVOLVEMENT IN NTD</scope>
    <scope>VARIANTS NTD HIS-349; GLY-783 AND GLN-913</scope>
    <scope>CHARACTERIZATION OF VARIANTS NTD GLY-783 AND GLN-913</scope>
</reference>
<reference key="30">
    <citation type="journal article" date="2010" name="Protein Sci.">
        <title>Rapid, robotic, small-scale protein production for NMR screening and structure determination.</title>
        <authorList>
            <person name="Jensen D.R."/>
            <person name="Woytovich C."/>
            <person name="Li M."/>
            <person name="Duvnjak P."/>
            <person name="Cassidy M.S."/>
            <person name="Frederick R.O."/>
            <person name="Bergeman L.F."/>
            <person name="Peterson F.C."/>
            <person name="Volkman B.F."/>
        </authorList>
    </citation>
    <scope>STRUCTURE BY NMR OF 451-549</scope>
</reference>
<keyword id="KW-0002">3D-structure</keyword>
<keyword id="KW-0007">Acetylation</keyword>
<keyword id="KW-0025">Alternative splicing</keyword>
<keyword id="KW-0131">Cell cycle</keyword>
<keyword id="KW-0132">Cell division</keyword>
<keyword id="KW-0965">Cell junction</keyword>
<keyword id="KW-1003">Cell membrane</keyword>
<keyword id="KW-0175">Coiled coil</keyword>
<keyword id="KW-0963">Cytoplasm</keyword>
<keyword id="KW-0206">Cytoskeleton</keyword>
<keyword id="KW-0221">Differentiation</keyword>
<keyword id="KW-0225">Disease variant</keyword>
<keyword id="KW-0446">Lipid-binding</keyword>
<keyword id="KW-0472">Membrane</keyword>
<keyword id="KW-0597">Phosphoprotein</keyword>
<keyword id="KW-1267">Proteomics identification</keyword>
<keyword id="KW-1185">Reference proteome</keyword>
<keyword id="KW-0677">Repeat</keyword>
<keyword id="KW-0796">Tight junction</keyword>
<organism>
    <name type="scientific">Homo sapiens</name>
    <name type="common">Human</name>
    <dbReference type="NCBI Taxonomy" id="9606"/>
    <lineage>
        <taxon>Eukaryota</taxon>
        <taxon>Metazoa</taxon>
        <taxon>Chordata</taxon>
        <taxon>Craniata</taxon>
        <taxon>Vertebrata</taxon>
        <taxon>Euteleostomi</taxon>
        <taxon>Mammalia</taxon>
        <taxon>Eutheria</taxon>
        <taxon>Euarchontoglires</taxon>
        <taxon>Primates</taxon>
        <taxon>Haplorrhini</taxon>
        <taxon>Catarrhini</taxon>
        <taxon>Hominidae</taxon>
        <taxon>Homo</taxon>
    </lineage>
</organism>
<gene>
    <name evidence="27" type="primary">PARD3</name>
    <name type="synonym">PAR3</name>
    <name type="synonym">PAR3A</name>
</gene>
<feature type="chain" id="PRO_0000185069" description="Partitioning defective 3 homolog">
    <location>
        <begin position="1"/>
        <end position="1356"/>
    </location>
</feature>
<feature type="domain" description="PDZ 1" evidence="5">
    <location>
        <begin position="271"/>
        <end position="359"/>
    </location>
</feature>
<feature type="domain" description="PDZ 2" evidence="5">
    <location>
        <begin position="461"/>
        <end position="546"/>
    </location>
</feature>
<feature type="domain" description="PDZ 3" evidence="5">
    <location>
        <begin position="590"/>
        <end position="677"/>
    </location>
</feature>
<feature type="region of interest" description="Disordered" evidence="6">
    <location>
        <begin position="81"/>
        <end position="100"/>
    </location>
</feature>
<feature type="region of interest" description="Disordered" evidence="6">
    <location>
        <begin position="154"/>
        <end position="262"/>
    </location>
</feature>
<feature type="region of interest" description="Disordered" evidence="6">
    <location>
        <begin position="408"/>
        <end position="448"/>
    </location>
</feature>
<feature type="region of interest" description="Interaction with PRKCI and PRKCZ" evidence="3">
    <location>
        <begin position="712"/>
        <end position="936"/>
    </location>
</feature>
<feature type="region of interest" description="Disordered" evidence="6">
    <location>
        <begin position="865"/>
        <end position="886"/>
    </location>
</feature>
<feature type="region of interest" description="Disordered" evidence="6">
    <location>
        <begin position="932"/>
        <end position="1025"/>
    </location>
</feature>
<feature type="region of interest" description="Interaction with FRMD4A" evidence="2">
    <location>
        <begin position="935"/>
        <end position="1356"/>
    </location>
</feature>
<feature type="region of interest" description="Disordered" evidence="6">
    <location>
        <begin position="1129"/>
        <end position="1356"/>
    </location>
</feature>
<feature type="coiled-coil region" evidence="4">
    <location>
        <begin position="1049"/>
        <end position="1077"/>
    </location>
</feature>
<feature type="coiled-coil region" evidence="4">
    <location>
        <begin position="1151"/>
        <end position="1174"/>
    </location>
</feature>
<feature type="coiled-coil region" evidence="4">
    <location>
        <begin position="1201"/>
        <end position="1224"/>
    </location>
</feature>
<feature type="coiled-coil region" evidence="4">
    <location>
        <begin position="1280"/>
        <end position="1301"/>
    </location>
</feature>
<feature type="compositionally biased region" description="Low complexity" evidence="6">
    <location>
        <begin position="91"/>
        <end position="100"/>
    </location>
</feature>
<feature type="compositionally biased region" description="Polar residues" evidence="6">
    <location>
        <begin position="154"/>
        <end position="163"/>
    </location>
</feature>
<feature type="compositionally biased region" description="Polar residues" evidence="6">
    <location>
        <begin position="171"/>
        <end position="187"/>
    </location>
</feature>
<feature type="compositionally biased region" description="Basic and acidic residues" evidence="6">
    <location>
        <begin position="190"/>
        <end position="203"/>
    </location>
</feature>
<feature type="compositionally biased region" description="Polar residues" evidence="6">
    <location>
        <begin position="204"/>
        <end position="224"/>
    </location>
</feature>
<feature type="compositionally biased region" description="Basic and acidic residues" evidence="6">
    <location>
        <begin position="246"/>
        <end position="260"/>
    </location>
</feature>
<feature type="compositionally biased region" description="Acidic residues" evidence="6">
    <location>
        <begin position="939"/>
        <end position="953"/>
    </location>
</feature>
<feature type="compositionally biased region" description="Polar residues" evidence="6">
    <location>
        <begin position="968"/>
        <end position="982"/>
    </location>
</feature>
<feature type="compositionally biased region" description="Basic and acidic residues" evidence="6">
    <location>
        <begin position="983"/>
        <end position="1009"/>
    </location>
</feature>
<feature type="compositionally biased region" description="Polar residues" evidence="6">
    <location>
        <begin position="1136"/>
        <end position="1149"/>
    </location>
</feature>
<feature type="compositionally biased region" description="Basic and acidic residues" evidence="6">
    <location>
        <begin position="1150"/>
        <end position="1177"/>
    </location>
</feature>
<feature type="compositionally biased region" description="Low complexity" evidence="6">
    <location>
        <begin position="1196"/>
        <end position="1205"/>
    </location>
</feature>
<feature type="compositionally biased region" description="Polar residues" evidence="6">
    <location>
        <begin position="1221"/>
        <end position="1245"/>
    </location>
</feature>
<feature type="compositionally biased region" description="Basic and acidic residues" evidence="6">
    <location>
        <begin position="1285"/>
        <end position="1298"/>
    </location>
</feature>
<feature type="compositionally biased region" description="Polar residues" evidence="6">
    <location>
        <begin position="1337"/>
        <end position="1346"/>
    </location>
</feature>
<feature type="compositionally biased region" description="Basic and acidic residues" evidence="6">
    <location>
        <begin position="1347"/>
        <end position="1356"/>
    </location>
</feature>
<feature type="modified residue" description="Phosphoserine" evidence="34">
    <location>
        <position position="25"/>
    </location>
</feature>
<feature type="modified residue" description="Phosphothreonine" evidence="34">
    <location>
        <position position="91"/>
    </location>
</feature>
<feature type="modified residue" description="Phosphoserine" evidence="2">
    <location>
        <position position="156"/>
    </location>
</feature>
<feature type="modified residue" description="Phosphoserine" evidence="33">
    <location>
        <position position="174"/>
    </location>
</feature>
<feature type="modified residue" description="Phosphoserine" evidence="28 29 30 31 32 33 34">
    <location>
        <position position="383"/>
    </location>
</feature>
<feature type="modified residue" description="Phosphotyrosine" evidence="34">
    <location>
        <position position="489"/>
    </location>
</feature>
<feature type="modified residue" description="Phosphoserine" evidence="29 33">
    <location>
        <position position="692"/>
    </location>
</feature>
<feature type="modified residue" description="Phosphoserine" evidence="28 29 33">
    <location>
        <position position="695"/>
    </location>
</feature>
<feature type="modified residue" description="Phosphoserine" evidence="33">
    <location>
        <position position="715"/>
    </location>
</feature>
<feature type="modified residue" description="Phosphoserine" evidence="29 30 31 33">
    <location>
        <position position="728"/>
    </location>
</feature>
<feature type="modified residue" description="Phosphoserine" evidence="29">
    <location>
        <position position="809"/>
    </location>
</feature>
<feature type="modified residue" description="Phosphoserine" evidence="33">
    <location>
        <position position="827"/>
    </location>
</feature>
<feature type="modified residue" description="N6-acetyllysine" evidence="2">
    <location>
        <position position="834"/>
    </location>
</feature>
<feature type="modified residue" description="Phosphoserine" evidence="33">
    <location>
        <position position="837"/>
    </location>
</feature>
<feature type="modified residue" description="N6-acetyllysine" evidence="2">
    <location>
        <position position="851"/>
    </location>
</feature>
<feature type="modified residue" description="Phosphoserine" evidence="29 30 31 32 33">
    <location>
        <position position="852"/>
    </location>
</feature>
<feature type="modified residue" description="Phosphoserine" evidence="29 31 32 33">
    <location>
        <position position="873"/>
    </location>
</feature>
<feature type="modified residue" description="N6-acetyllysine" evidence="2">
    <location>
        <position position="885"/>
    </location>
</feature>
<feature type="modified residue" description="Phosphoserine; by AURKA" evidence="14 33">
    <location>
        <position position="962"/>
    </location>
</feature>
<feature type="modified residue" description="Phosphoserine" evidence="33">
    <location>
        <position position="971"/>
    </location>
</feature>
<feature type="modified residue" description="Phosphoserine" evidence="33">
    <location>
        <position position="973"/>
    </location>
</feature>
<feature type="modified residue" description="Phosphoserine" evidence="33">
    <location>
        <position position="1046"/>
    </location>
</feature>
<feature type="modified residue" description="N6-acetyllysine" evidence="2">
    <location>
        <position position="1350"/>
    </location>
</feature>
<feature type="splice variant" id="VSP_007462" description="In isoform 3 and isoform 5." evidence="20 21 22 23">
    <location>
        <begin position="195"/>
        <end position="238"/>
    </location>
</feature>
<feature type="splice variant" id="VSP_007463" description="In isoform 3, isoform 5, isoform 6, isoform 7, isoform 9 and isoform 11." evidence="20 21 22 23 24 25">
    <location>
        <begin position="557"/>
        <end position="569"/>
    </location>
</feature>
<feature type="splice variant" id="VSP_007464" description="In isoform 2, isoform 3, isoform 5, isoform 6, isoform 7, isoform 8, isoform 9, isoform 10 and isoform 11." evidence="20 21 22 23 24 25">
    <location>
        <begin position="740"/>
        <end position="742"/>
    </location>
</feature>
<feature type="splice variant" id="VSP_007465" description="In isoform 3, isoform 6, isoform 7, isoform 9 and isoform 10." evidence="20 21 22 24">
    <location>
        <begin position="827"/>
        <end position="856"/>
    </location>
</feature>
<feature type="splice variant" id="VSP_007467" description="In isoform 10." evidence="24">
    <original>IA</original>
    <variation>T</variation>
    <location>
        <begin position="857"/>
        <end position="858"/>
    </location>
</feature>
<feature type="splice variant" id="VSP_007466" description="In isoform 5." evidence="22 23">
    <original>I</original>
    <variation>S</variation>
    <location>
        <position position="857"/>
    </location>
</feature>
<feature type="splice variant" id="VSP_007468" description="In isoform 5." evidence="22 23">
    <location>
        <begin position="858"/>
        <end position="872"/>
    </location>
</feature>
<feature type="splice variant" id="VSP_007469" description="In isoform 4, isoform 5 and isoform 7." evidence="21 22 23">
    <location>
        <begin position="1025"/>
        <end position="1061"/>
    </location>
</feature>
<feature type="splice variant" id="VSP_007470" description="In isoform 8, isoform 9 and isoform 10." evidence="21 24">
    <original>RFGKHRKDDK</original>
    <variation>SLAKLKPEKR</variation>
    <location>
        <begin position="1025"/>
        <end position="1034"/>
    </location>
</feature>
<feature type="splice variant" id="VSP_007471" description="In isoform 8, isoform 9 and isoform 10." evidence="21 24">
    <location>
        <begin position="1035"/>
        <end position="1356"/>
    </location>
</feature>
<feature type="sequence variant" id="VAR_015663" description="In dbSNP:rs1436731.">
    <original>E</original>
    <variation>D</variation>
    <location>
        <position position="107"/>
    </location>
</feature>
<feature type="sequence variant" id="VAR_079846" description="In NTD; uncertain significance; dbSNP:rs199923448." evidence="19">
    <original>R</original>
    <variation>H</variation>
    <location>
        <position position="349"/>
    </location>
</feature>
<feature type="sequence variant" id="VAR_050453" description="In dbSNP:rs3758459.">
    <original>D</original>
    <variation>N</variation>
    <location>
        <position position="575"/>
    </location>
</feature>
<feature type="sequence variant" id="VAR_079847" description="In NTD; reduces interaction with PRKCA, disrupts tight junction formation in epithelial cells; dbSNP:rs1114167354." evidence="19">
    <original>D</original>
    <variation>G</variation>
    <location>
        <position position="783"/>
    </location>
</feature>
<feature type="sequence variant" id="VAR_079848" description="In NTD; reduces interaction with PRKCA; increases phosphorylation; disrupts tight junction formation in epithelial cells; dbSNP:rs781461462." evidence="19">
    <original>P</original>
    <variation>Q</variation>
    <location>
        <position position="913"/>
    </location>
</feature>
<feature type="mutagenesis site" description="Abolishes phosphorylation by AURKA." evidence="14">
    <original>S</original>
    <variation>A</variation>
    <location>
        <position position="962"/>
    </location>
</feature>
<feature type="mutagenesis site" description="Delayed epithelial tight junction assembly.">
    <original>Y</original>
    <variation>F</variation>
    <location>
        <position position="1127"/>
    </location>
</feature>
<feature type="sequence conflict" description="In Ref. 8; BAB55330." evidence="26" ref="8">
    <original>T</original>
    <variation>A</variation>
    <location>
        <position position="190"/>
    </location>
</feature>
<feature type="sequence conflict" description="In Ref. 8; BAB55330." evidence="26" ref="8">
    <original>L</original>
    <variation>Q</variation>
    <location>
        <position position="233"/>
    </location>
</feature>
<feature type="sequence conflict" description="In Ref. 8; BAB55330." evidence="26" ref="8">
    <original>N</original>
    <variation>S</variation>
    <location>
        <position position="594"/>
    </location>
</feature>
<feature type="sequence conflict" description="In Ref. 7; AAH71566." evidence="26" ref="7">
    <original>D</original>
    <variation>N</variation>
    <location>
        <position position="764"/>
    </location>
</feature>
<feature type="sequence conflict" description="In Ref. 8; BAA91366." evidence="26" ref="8">
    <original>GKEKK</original>
    <variation>VELHE</variation>
    <location>
        <begin position="996"/>
        <end position="1000"/>
    </location>
</feature>
<feature type="strand" evidence="35">
    <location>
        <begin position="458"/>
        <end position="465"/>
    </location>
</feature>
<feature type="strand" evidence="35">
    <location>
        <begin position="473"/>
        <end position="476"/>
    </location>
</feature>
<feature type="strand" evidence="35">
    <location>
        <begin position="481"/>
        <end position="485"/>
    </location>
</feature>
<feature type="strand" evidence="35">
    <location>
        <begin position="488"/>
        <end position="493"/>
    </location>
</feature>
<feature type="helix" evidence="35">
    <location>
        <begin position="498"/>
        <end position="501"/>
    </location>
</feature>
<feature type="strand" evidence="35">
    <location>
        <begin position="507"/>
        <end position="514"/>
    </location>
</feature>
<feature type="helix" evidence="35">
    <location>
        <begin position="524"/>
        <end position="533"/>
    </location>
</feature>
<feature type="strand" evidence="35">
    <location>
        <begin position="539"/>
        <end position="546"/>
    </location>
</feature>
<feature type="modified residue" description="Phosphoserine" evidence="34">
    <location sequence="Q8TEW0-5">
        <position position="792"/>
    </location>
</feature>
<evidence type="ECO:0000250" key="1"/>
<evidence type="ECO:0000250" key="2">
    <source>
        <dbReference type="UniProtKB" id="Q99NH2"/>
    </source>
</evidence>
<evidence type="ECO:0000250" key="3">
    <source>
        <dbReference type="UniProtKB" id="Q9Z340"/>
    </source>
</evidence>
<evidence type="ECO:0000255" key="4"/>
<evidence type="ECO:0000255" key="5">
    <source>
        <dbReference type="PROSITE-ProRule" id="PRU00143"/>
    </source>
</evidence>
<evidence type="ECO:0000256" key="6">
    <source>
        <dbReference type="SAM" id="MobiDB-lite"/>
    </source>
</evidence>
<evidence type="ECO:0000269" key="7">
    <source>
    </source>
</evidence>
<evidence type="ECO:0000269" key="8">
    <source>
    </source>
</evidence>
<evidence type="ECO:0000269" key="9">
    <source>
    </source>
</evidence>
<evidence type="ECO:0000269" key="10">
    <source>
    </source>
</evidence>
<evidence type="ECO:0000269" key="11">
    <source>
    </source>
</evidence>
<evidence type="ECO:0000269" key="12">
    <source>
    </source>
</evidence>
<evidence type="ECO:0000269" key="13">
    <source>
    </source>
</evidence>
<evidence type="ECO:0000269" key="14">
    <source>
    </source>
</evidence>
<evidence type="ECO:0000269" key="15">
    <source>
    </source>
</evidence>
<evidence type="ECO:0000269" key="16">
    <source>
    </source>
</evidence>
<evidence type="ECO:0000269" key="17">
    <source>
    </source>
</evidence>
<evidence type="ECO:0000269" key="18">
    <source>
    </source>
</evidence>
<evidence type="ECO:0000269" key="19">
    <source>
    </source>
</evidence>
<evidence type="ECO:0000303" key="20">
    <source>
    </source>
</evidence>
<evidence type="ECO:0000303" key="21">
    <source>
    </source>
</evidence>
<evidence type="ECO:0000303" key="22">
    <source>
    </source>
</evidence>
<evidence type="ECO:0000303" key="23">
    <source>
    </source>
</evidence>
<evidence type="ECO:0000303" key="24">
    <source>
    </source>
</evidence>
<evidence type="ECO:0000303" key="25">
    <source>
    </source>
</evidence>
<evidence type="ECO:0000305" key="26"/>
<evidence type="ECO:0000312" key="27">
    <source>
        <dbReference type="HGNC" id="HGNC:16051"/>
    </source>
</evidence>
<evidence type="ECO:0007744" key="28">
    <source>
    </source>
</evidence>
<evidence type="ECO:0007744" key="29">
    <source>
    </source>
</evidence>
<evidence type="ECO:0007744" key="30">
    <source>
    </source>
</evidence>
<evidence type="ECO:0007744" key="31">
    <source>
    </source>
</evidence>
<evidence type="ECO:0007744" key="32">
    <source>
    </source>
</evidence>
<evidence type="ECO:0007744" key="33">
    <source>
    </source>
</evidence>
<evidence type="ECO:0007744" key="34">
    <source>
    </source>
</evidence>
<evidence type="ECO:0007829" key="35">
    <source>
        <dbReference type="PDB" id="2KOM"/>
    </source>
</evidence>
<dbReference type="EMBL" id="AF252293">
    <property type="protein sequence ID" value="AAF71530.1"/>
    <property type="molecule type" value="mRNA"/>
</dbReference>
<dbReference type="EMBL" id="AF196185">
    <property type="protein sequence ID" value="AAK27891.1"/>
    <property type="molecule type" value="mRNA"/>
</dbReference>
<dbReference type="EMBL" id="AF196186">
    <property type="protein sequence ID" value="AAK27892.1"/>
    <property type="molecule type" value="mRNA"/>
</dbReference>
<dbReference type="EMBL" id="AF332592">
    <property type="protein sequence ID" value="AAK69192.1"/>
    <property type="molecule type" value="mRNA"/>
</dbReference>
<dbReference type="EMBL" id="AF332593">
    <property type="protein sequence ID" value="AAK69193.1"/>
    <property type="molecule type" value="mRNA"/>
</dbReference>
<dbReference type="EMBL" id="AB073671">
    <property type="protein sequence ID" value="BAC54037.1"/>
    <property type="molecule type" value="mRNA"/>
</dbReference>
<dbReference type="EMBL" id="AF467002">
    <property type="protein sequence ID" value="AAL76042.1"/>
    <property type="molecule type" value="mRNA"/>
</dbReference>
<dbReference type="EMBL" id="AF467003">
    <property type="protein sequence ID" value="AAL76043.1"/>
    <property type="molecule type" value="mRNA"/>
</dbReference>
<dbReference type="EMBL" id="AF467004">
    <property type="protein sequence ID" value="AAL76044.1"/>
    <property type="molecule type" value="mRNA"/>
</dbReference>
<dbReference type="EMBL" id="AF467005">
    <property type="protein sequence ID" value="AAL76045.1"/>
    <property type="molecule type" value="mRNA"/>
</dbReference>
<dbReference type="EMBL" id="AF467006">
    <property type="protein sequence ID" value="AAL76046.1"/>
    <property type="molecule type" value="mRNA"/>
</dbReference>
<dbReference type="EMBL" id="AL138768">
    <property type="status" value="NOT_ANNOTATED_CDS"/>
    <property type="molecule type" value="Genomic_DNA"/>
</dbReference>
<dbReference type="EMBL" id="AL160409">
    <property type="status" value="NOT_ANNOTATED_CDS"/>
    <property type="molecule type" value="Genomic_DNA"/>
</dbReference>
<dbReference type="EMBL" id="AL360233">
    <property type="status" value="NOT_ANNOTATED_CDS"/>
    <property type="molecule type" value="Genomic_DNA"/>
</dbReference>
<dbReference type="EMBL" id="AL390766">
    <property type="status" value="NOT_ANNOTATED_CDS"/>
    <property type="molecule type" value="Genomic_DNA"/>
</dbReference>
<dbReference type="EMBL" id="AL392123">
    <property type="status" value="NOT_ANNOTATED_CDS"/>
    <property type="molecule type" value="Genomic_DNA"/>
</dbReference>
<dbReference type="EMBL" id="AL450337">
    <property type="status" value="NOT_ANNOTATED_CDS"/>
    <property type="molecule type" value="Genomic_DNA"/>
</dbReference>
<dbReference type="EMBL" id="CH471072">
    <property type="protein sequence ID" value="EAW85932.1"/>
    <property type="molecule type" value="Genomic_DNA"/>
</dbReference>
<dbReference type="EMBL" id="CH471072">
    <property type="protein sequence ID" value="EAW85934.1"/>
    <property type="molecule type" value="Genomic_DNA"/>
</dbReference>
<dbReference type="EMBL" id="BC011711">
    <property type="protein sequence ID" value="AAH11711.2"/>
    <property type="molecule type" value="mRNA"/>
</dbReference>
<dbReference type="EMBL" id="BC071566">
    <property type="protein sequence ID" value="AAH71566.1"/>
    <property type="molecule type" value="mRNA"/>
</dbReference>
<dbReference type="EMBL" id="AK000761">
    <property type="protein sequence ID" value="BAA91366.1"/>
    <property type="status" value="ALT_INIT"/>
    <property type="molecule type" value="mRNA"/>
</dbReference>
<dbReference type="EMBL" id="AK027735">
    <property type="protein sequence ID" value="BAB55330.1"/>
    <property type="status" value="ALT_INIT"/>
    <property type="molecule type" value="mRNA"/>
</dbReference>
<dbReference type="EMBL" id="AF177228">
    <property type="protein sequence ID" value="AAG33676.1"/>
    <property type="status" value="ALT_SEQ"/>
    <property type="molecule type" value="mRNA"/>
</dbReference>
<dbReference type="CCDS" id="CCDS53509.1">
    <molecule id="Q8TEW0-5"/>
</dbReference>
<dbReference type="CCDS" id="CCDS53510.1">
    <molecule id="Q8TEW0-3"/>
</dbReference>
<dbReference type="CCDS" id="CCDS53511.1">
    <molecule id="Q8TEW0-11"/>
</dbReference>
<dbReference type="CCDS" id="CCDS53512.1">
    <molecule id="Q8TEW0-6"/>
</dbReference>
<dbReference type="CCDS" id="CCDS53513.1">
    <molecule id="Q8TEW0-9"/>
</dbReference>
<dbReference type="CCDS" id="CCDS53514.1">
    <molecule id="Q8TEW0-4"/>
</dbReference>
<dbReference type="CCDS" id="CCDS53515.1">
    <molecule id="Q8TEW0-2"/>
</dbReference>
<dbReference type="CCDS" id="CCDS53516.1">
    <molecule id="Q8TEW0-8"/>
</dbReference>
<dbReference type="CCDS" id="CCDS7178.1">
    <molecule id="Q8TEW0-1"/>
</dbReference>
<dbReference type="RefSeq" id="NP_001171714.1">
    <molecule id="Q8TEW0-2"/>
    <property type="nucleotide sequence ID" value="NM_001184785.2"/>
</dbReference>
<dbReference type="RefSeq" id="NP_001171715.1">
    <molecule id="Q8TEW0-11"/>
    <property type="nucleotide sequence ID" value="NM_001184786.2"/>
</dbReference>
<dbReference type="RefSeq" id="NP_001171716.1">
    <molecule id="Q8TEW0-4"/>
    <property type="nucleotide sequence ID" value="NM_001184787.2"/>
</dbReference>
<dbReference type="RefSeq" id="NP_001171717.1">
    <molecule id="Q8TEW0-6"/>
    <property type="nucleotide sequence ID" value="NM_001184788.2"/>
</dbReference>
<dbReference type="RefSeq" id="NP_001171718.1">
    <molecule id="Q8TEW0-7"/>
    <property type="nucleotide sequence ID" value="NM_001184789.2"/>
</dbReference>
<dbReference type="RefSeq" id="NP_001171719.1">
    <molecule id="Q8TEW0-3"/>
    <property type="nucleotide sequence ID" value="NM_001184790.2"/>
</dbReference>
<dbReference type="RefSeq" id="NP_001171720.1">
    <molecule id="Q8TEW0-5"/>
    <property type="nucleotide sequence ID" value="NM_001184791.2"/>
</dbReference>
<dbReference type="RefSeq" id="NP_001171721.1">
    <molecule id="Q8TEW0-8"/>
    <property type="nucleotide sequence ID" value="NM_001184792.2"/>
</dbReference>
<dbReference type="RefSeq" id="NP_001171722.1">
    <molecule id="Q8TEW0-10"/>
    <property type="nucleotide sequence ID" value="NM_001184793.2"/>
</dbReference>
<dbReference type="RefSeq" id="NP_001171723.1">
    <molecule id="Q8TEW0-9"/>
    <property type="nucleotide sequence ID" value="NM_001184794.2"/>
</dbReference>
<dbReference type="RefSeq" id="NP_062565.2">
    <molecule id="Q8TEW0-1"/>
    <property type="nucleotide sequence ID" value="NM_019619.3"/>
</dbReference>
<dbReference type="PDB" id="2KOM">
    <property type="method" value="NMR"/>
    <property type="chains" value="A=451-549"/>
</dbReference>
<dbReference type="PDBsum" id="2KOM"/>
<dbReference type="SMR" id="Q8TEW0"/>
<dbReference type="BioGRID" id="121134">
    <property type="interactions" value="299"/>
</dbReference>
<dbReference type="ComplexPortal" id="CPX-6183">
    <property type="entry name" value="PAR cell polarity complex, PARD6A-PRKCI variant"/>
</dbReference>
<dbReference type="ComplexPortal" id="CPX-6193">
    <property type="entry name" value="PAR cell polarity complex, PARD6B-PRKCI variant"/>
</dbReference>
<dbReference type="ComplexPortal" id="CPX-6194">
    <property type="entry name" value="PAR cell polarity complex, PARD6G-PRKCI variant"/>
</dbReference>
<dbReference type="ComplexPortal" id="CPX-6195">
    <property type="entry name" value="PAR cell polarity complex, PARD6G-PRKCZ variant"/>
</dbReference>
<dbReference type="ComplexPortal" id="CPX-6196">
    <property type="entry name" value="PAR cell polarity complex, PARD6B-PRKCZ variant"/>
</dbReference>
<dbReference type="ComplexPortal" id="CPX-6197">
    <property type="entry name" value="PAR cell polarity complex, PARD6A-PRKCZ variant"/>
</dbReference>
<dbReference type="CORUM" id="Q8TEW0"/>
<dbReference type="DIP" id="DIP-31315N"/>
<dbReference type="FunCoup" id="Q8TEW0">
    <property type="interactions" value="2276"/>
</dbReference>
<dbReference type="IntAct" id="Q8TEW0">
    <property type="interactions" value="90"/>
</dbReference>
<dbReference type="MINT" id="Q8TEW0"/>
<dbReference type="STRING" id="9606.ENSP00000363921"/>
<dbReference type="GlyGen" id="Q8TEW0">
    <property type="glycosylation" value="1 site, 1 O-linked glycan (1 site)"/>
</dbReference>
<dbReference type="iPTMnet" id="Q8TEW0"/>
<dbReference type="MetOSite" id="Q8TEW0"/>
<dbReference type="PhosphoSitePlus" id="Q8TEW0"/>
<dbReference type="BioMuta" id="PARD3"/>
<dbReference type="DMDM" id="30913162"/>
<dbReference type="jPOST" id="Q8TEW0"/>
<dbReference type="MassIVE" id="Q8TEW0"/>
<dbReference type="PaxDb" id="9606-ENSP00000363921"/>
<dbReference type="PeptideAtlas" id="Q8TEW0"/>
<dbReference type="ProteomicsDB" id="26974"/>
<dbReference type="ProteomicsDB" id="74506">
    <molecule id="Q8TEW0-1"/>
</dbReference>
<dbReference type="ProteomicsDB" id="74507">
    <molecule id="Q8TEW0-10"/>
</dbReference>
<dbReference type="ProteomicsDB" id="74508">
    <molecule id="Q8TEW0-2"/>
</dbReference>
<dbReference type="ProteomicsDB" id="74509">
    <molecule id="Q8TEW0-3"/>
</dbReference>
<dbReference type="ProteomicsDB" id="74510">
    <molecule id="Q8TEW0-4"/>
</dbReference>
<dbReference type="ProteomicsDB" id="74511">
    <molecule id="Q8TEW0-5"/>
</dbReference>
<dbReference type="ProteomicsDB" id="74512">
    <molecule id="Q8TEW0-6"/>
</dbReference>
<dbReference type="ProteomicsDB" id="74513">
    <molecule id="Q8TEW0-7"/>
</dbReference>
<dbReference type="ProteomicsDB" id="74514">
    <molecule id="Q8TEW0-8"/>
</dbReference>
<dbReference type="ProteomicsDB" id="74515">
    <molecule id="Q8TEW0-9"/>
</dbReference>
<dbReference type="Pumba" id="Q8TEW0"/>
<dbReference type="Antibodypedia" id="26597">
    <property type="antibodies" value="259 antibodies from 35 providers"/>
</dbReference>
<dbReference type="DNASU" id="56288"/>
<dbReference type="Ensembl" id="ENST00000340077.9">
    <molecule id="Q8TEW0-8"/>
    <property type="protein sequence ID" value="ENSP00000341844.5"/>
    <property type="gene ID" value="ENSG00000148498.17"/>
</dbReference>
<dbReference type="Ensembl" id="ENST00000346874.9">
    <molecule id="Q8TEW0-4"/>
    <property type="protein sequence ID" value="ENSP00000340591.4"/>
    <property type="gene ID" value="ENSG00000148498.17"/>
</dbReference>
<dbReference type="Ensembl" id="ENST00000350537.9">
    <molecule id="Q8TEW0-6"/>
    <property type="protein sequence ID" value="ENSP00000311986.6"/>
    <property type="gene ID" value="ENSG00000148498.17"/>
</dbReference>
<dbReference type="Ensembl" id="ENST00000374776.6">
    <molecule id="Q8TEW0-9"/>
    <property type="protein sequence ID" value="ENSP00000363908.1"/>
    <property type="gene ID" value="ENSG00000148498.17"/>
</dbReference>
<dbReference type="Ensembl" id="ENST00000374788.8">
    <molecule id="Q8TEW0-2"/>
    <property type="protein sequence ID" value="ENSP00000363920.3"/>
    <property type="gene ID" value="ENSG00000148498.17"/>
</dbReference>
<dbReference type="Ensembl" id="ENST00000374789.8">
    <molecule id="Q8TEW0-1"/>
    <property type="protein sequence ID" value="ENSP00000363921.3"/>
    <property type="gene ID" value="ENSG00000148498.17"/>
</dbReference>
<dbReference type="Ensembl" id="ENST00000374794.8">
    <molecule id="Q8TEW0-5"/>
    <property type="protein sequence ID" value="ENSP00000363926.3"/>
    <property type="gene ID" value="ENSG00000148498.17"/>
</dbReference>
<dbReference type="Ensembl" id="ENST00000545260.5">
    <molecule id="Q8TEW0-3"/>
    <property type="protein sequence ID" value="ENSP00000440857.1"/>
    <property type="gene ID" value="ENSG00000148498.17"/>
</dbReference>
<dbReference type="Ensembl" id="ENST00000545693.5">
    <molecule id="Q8TEW0-11"/>
    <property type="protein sequence ID" value="ENSP00000443147.1"/>
    <property type="gene ID" value="ENSG00000148498.17"/>
</dbReference>
<dbReference type="GeneID" id="56288"/>
<dbReference type="KEGG" id="hsa:56288"/>
<dbReference type="MANE-Select" id="ENST00000374788.8">
    <molecule id="Q8TEW0-2"/>
    <property type="protein sequence ID" value="ENSP00000363920.3"/>
    <property type="RefSeq nucleotide sequence ID" value="NM_001184785.2"/>
    <property type="RefSeq protein sequence ID" value="NP_001171714.1"/>
</dbReference>
<dbReference type="UCSC" id="uc001ixq.3">
    <molecule id="Q8TEW0-1"/>
    <property type="organism name" value="human"/>
</dbReference>
<dbReference type="AGR" id="HGNC:16051"/>
<dbReference type="CTD" id="56288"/>
<dbReference type="DisGeNET" id="56288"/>
<dbReference type="GeneCards" id="PARD3"/>
<dbReference type="HGNC" id="HGNC:16051">
    <property type="gene designation" value="PARD3"/>
</dbReference>
<dbReference type="HPA" id="ENSG00000148498">
    <property type="expression patterns" value="Low tissue specificity"/>
</dbReference>
<dbReference type="MalaCards" id="PARD3"/>
<dbReference type="MIM" id="182940">
    <property type="type" value="phenotype"/>
</dbReference>
<dbReference type="MIM" id="606745">
    <property type="type" value="gene"/>
</dbReference>
<dbReference type="neXtProt" id="NX_Q8TEW0"/>
<dbReference type="OpenTargets" id="ENSG00000148498"/>
<dbReference type="PharmGKB" id="PA32936"/>
<dbReference type="VEuPathDB" id="HostDB:ENSG00000148498"/>
<dbReference type="eggNOG" id="KOG3528">
    <property type="taxonomic scope" value="Eukaryota"/>
</dbReference>
<dbReference type="GeneTree" id="ENSGT00950000183214"/>
<dbReference type="HOGENOM" id="CLU_006629_0_0_1"/>
<dbReference type="InParanoid" id="Q8TEW0"/>
<dbReference type="OMA" id="WPNSKPY"/>
<dbReference type="OrthoDB" id="6264899at2759"/>
<dbReference type="PAN-GO" id="Q8TEW0">
    <property type="GO annotations" value="11 GO annotations based on evolutionary models"/>
</dbReference>
<dbReference type="PhylomeDB" id="Q8TEW0"/>
<dbReference type="TreeFam" id="TF323729"/>
<dbReference type="PathwayCommons" id="Q8TEW0"/>
<dbReference type="Reactome" id="R-HSA-2173791">
    <property type="pathway name" value="TGF-beta receptor signaling in EMT (epithelial to mesenchymal transition)"/>
</dbReference>
<dbReference type="Reactome" id="R-HSA-420029">
    <property type="pathway name" value="Tight junction interactions"/>
</dbReference>
<dbReference type="SignaLink" id="Q8TEW0"/>
<dbReference type="SIGNOR" id="Q8TEW0"/>
<dbReference type="BioGRID-ORCS" id="56288">
    <property type="hits" value="70 hits in 1176 CRISPR screens"/>
</dbReference>
<dbReference type="ChiTaRS" id="PARD3">
    <property type="organism name" value="human"/>
</dbReference>
<dbReference type="EvolutionaryTrace" id="Q8TEW0"/>
<dbReference type="GeneWiki" id="PARD3"/>
<dbReference type="GenomeRNAi" id="56288"/>
<dbReference type="Pharos" id="Q8TEW0">
    <property type="development level" value="Tbio"/>
</dbReference>
<dbReference type="PRO" id="PR:Q8TEW0"/>
<dbReference type="Proteomes" id="UP000005640">
    <property type="component" value="Chromosome 10"/>
</dbReference>
<dbReference type="RNAct" id="Q8TEW0">
    <property type="molecule type" value="protein"/>
</dbReference>
<dbReference type="Bgee" id="ENSG00000148498">
    <property type="expression patterns" value="Expressed in cervix squamous epithelium and 200 other cell types or tissues"/>
</dbReference>
<dbReference type="ExpressionAtlas" id="Q8TEW0">
    <property type="expression patterns" value="baseline and differential"/>
</dbReference>
<dbReference type="GO" id="GO:0005912">
    <property type="term" value="C:adherens junction"/>
    <property type="evidence" value="ECO:0000318"/>
    <property type="project" value="GO_Central"/>
</dbReference>
<dbReference type="GO" id="GO:0043296">
    <property type="term" value="C:apical junction complex"/>
    <property type="evidence" value="ECO:0000318"/>
    <property type="project" value="GO_Central"/>
</dbReference>
<dbReference type="GO" id="GO:0016324">
    <property type="term" value="C:apical plasma membrane"/>
    <property type="evidence" value="ECO:0000318"/>
    <property type="project" value="GO_Central"/>
</dbReference>
<dbReference type="GO" id="GO:0005923">
    <property type="term" value="C:bicellular tight junction"/>
    <property type="evidence" value="ECO:0000314"/>
    <property type="project" value="UniProtKB"/>
</dbReference>
<dbReference type="GO" id="GO:0005938">
    <property type="term" value="C:cell cortex"/>
    <property type="evidence" value="ECO:0000318"/>
    <property type="project" value="GO_Central"/>
</dbReference>
<dbReference type="GO" id="GO:0030054">
    <property type="term" value="C:cell junction"/>
    <property type="evidence" value="ECO:0000314"/>
    <property type="project" value="HPA"/>
</dbReference>
<dbReference type="GO" id="GO:0005911">
    <property type="term" value="C:cell-cell junction"/>
    <property type="evidence" value="ECO:0000314"/>
    <property type="project" value="UniProtKB"/>
</dbReference>
<dbReference type="GO" id="GO:0005856">
    <property type="term" value="C:cytoskeleton"/>
    <property type="evidence" value="ECO:0007669"/>
    <property type="project" value="UniProtKB-SubCell"/>
</dbReference>
<dbReference type="GO" id="GO:0005829">
    <property type="term" value="C:cytosol"/>
    <property type="evidence" value="ECO:0000304"/>
    <property type="project" value="Reactome"/>
</dbReference>
<dbReference type="GO" id="GO:0012505">
    <property type="term" value="C:endomembrane system"/>
    <property type="evidence" value="ECO:0007669"/>
    <property type="project" value="UniProtKB-SubCell"/>
</dbReference>
<dbReference type="GO" id="GO:0033269">
    <property type="term" value="C:internode region of axon"/>
    <property type="evidence" value="ECO:0000250"/>
    <property type="project" value="UniProtKB"/>
</dbReference>
<dbReference type="GO" id="GO:0120157">
    <property type="term" value="C:PAR polarity complex"/>
    <property type="evidence" value="ECO:0000353"/>
    <property type="project" value="ComplexPortal"/>
</dbReference>
<dbReference type="GO" id="GO:0005886">
    <property type="term" value="C:plasma membrane"/>
    <property type="evidence" value="ECO:0000314"/>
    <property type="project" value="HPA"/>
</dbReference>
<dbReference type="GO" id="GO:0070160">
    <property type="term" value="C:tight junction"/>
    <property type="evidence" value="ECO:0000303"/>
    <property type="project" value="ComplexPortal"/>
</dbReference>
<dbReference type="GO" id="GO:0035091">
    <property type="term" value="F:phosphatidylinositol binding"/>
    <property type="evidence" value="ECO:0000318"/>
    <property type="project" value="GO_Central"/>
</dbReference>
<dbReference type="GO" id="GO:0005547">
    <property type="term" value="F:phosphatidylinositol-3,4,5-trisphosphate binding"/>
    <property type="evidence" value="ECO:0000250"/>
    <property type="project" value="UniProtKB"/>
</dbReference>
<dbReference type="GO" id="GO:0032266">
    <property type="term" value="F:phosphatidylinositol-3-phosphate binding"/>
    <property type="evidence" value="ECO:0000250"/>
    <property type="project" value="UniProtKB"/>
</dbReference>
<dbReference type="GO" id="GO:0005546">
    <property type="term" value="F:phosphatidylinositol-4,5-bisphosphate binding"/>
    <property type="evidence" value="ECO:0000250"/>
    <property type="project" value="UniProtKB"/>
</dbReference>
<dbReference type="GO" id="GO:0008356">
    <property type="term" value="P:asymmetric cell division"/>
    <property type="evidence" value="ECO:0000304"/>
    <property type="project" value="ProtInc"/>
</dbReference>
<dbReference type="GO" id="GO:0007409">
    <property type="term" value="P:axonogenesis"/>
    <property type="evidence" value="ECO:0000304"/>
    <property type="project" value="UniProtKB"/>
</dbReference>
<dbReference type="GO" id="GO:0070830">
    <property type="term" value="P:bicellular tight junction assembly"/>
    <property type="evidence" value="ECO:0000250"/>
    <property type="project" value="UniProtKB"/>
</dbReference>
<dbReference type="GO" id="GO:0007155">
    <property type="term" value="P:cell adhesion"/>
    <property type="evidence" value="ECO:0000318"/>
    <property type="project" value="GO_Central"/>
</dbReference>
<dbReference type="GO" id="GO:0030010">
    <property type="term" value="P:establishment of cell polarity"/>
    <property type="evidence" value="ECO:0000318"/>
    <property type="project" value="GO_Central"/>
</dbReference>
<dbReference type="GO" id="GO:0051660">
    <property type="term" value="P:establishment of centrosome localization"/>
    <property type="evidence" value="ECO:0000318"/>
    <property type="project" value="GO_Central"/>
</dbReference>
<dbReference type="GO" id="GO:0090162">
    <property type="term" value="P:establishment of epithelial cell polarity"/>
    <property type="evidence" value="ECO:0000250"/>
    <property type="project" value="UniProtKB"/>
</dbReference>
<dbReference type="GO" id="GO:0007163">
    <property type="term" value="P:establishment or maintenance of cell polarity"/>
    <property type="evidence" value="ECO:0000304"/>
    <property type="project" value="UniProtKB"/>
</dbReference>
<dbReference type="GO" id="GO:0045197">
    <property type="term" value="P:establishment or maintenance of epithelial cell apical/basal polarity"/>
    <property type="evidence" value="ECO:0000314"/>
    <property type="project" value="ComplexPortal"/>
</dbReference>
<dbReference type="GO" id="GO:0000226">
    <property type="term" value="P:microtubule cytoskeleton organization"/>
    <property type="evidence" value="ECO:0000318"/>
    <property type="project" value="GO_Central"/>
</dbReference>
<dbReference type="GO" id="GO:0022011">
    <property type="term" value="P:myelination in peripheral nervous system"/>
    <property type="evidence" value="ECO:0000250"/>
    <property type="project" value="UniProtKB"/>
</dbReference>
<dbReference type="GO" id="GO:0010801">
    <property type="term" value="P:negative regulation of peptidyl-threonine phosphorylation"/>
    <property type="evidence" value="ECO:0000250"/>
    <property type="project" value="UniProtKB"/>
</dbReference>
<dbReference type="GO" id="GO:0007200">
    <property type="term" value="P:phospholipase C-activating G protein-coupled receptor signaling pathway"/>
    <property type="evidence" value="ECO:0000304"/>
    <property type="project" value="UniProtKB"/>
</dbReference>
<dbReference type="GO" id="GO:0031643">
    <property type="term" value="P:positive regulation of myelination"/>
    <property type="evidence" value="ECO:0000250"/>
    <property type="project" value="UniProtKB"/>
</dbReference>
<dbReference type="GO" id="GO:0008104">
    <property type="term" value="P:protein localization"/>
    <property type="evidence" value="ECO:0000318"/>
    <property type="project" value="GO_Central"/>
</dbReference>
<dbReference type="GO" id="GO:0006612">
    <property type="term" value="P:protein targeting to membrane"/>
    <property type="evidence" value="ECO:0000250"/>
    <property type="project" value="UniProtKB"/>
</dbReference>
<dbReference type="GO" id="GO:0065003">
    <property type="term" value="P:protein-containing complex assembly"/>
    <property type="evidence" value="ECO:0000304"/>
    <property type="project" value="ProtInc"/>
</dbReference>
<dbReference type="CDD" id="cd06691">
    <property type="entry name" value="PDZ1_Par3-like"/>
    <property type="match status" value="1"/>
</dbReference>
<dbReference type="CDD" id="cd23058">
    <property type="entry name" value="PDZ2_Par3-like"/>
    <property type="match status" value="1"/>
</dbReference>
<dbReference type="CDD" id="cd23059">
    <property type="entry name" value="PDZ3_Par3-like"/>
    <property type="match status" value="1"/>
</dbReference>
<dbReference type="FunFam" id="2.30.42.10:FF:000078">
    <property type="entry name" value="Partitioning defective 3 homolog B"/>
    <property type="match status" value="1"/>
</dbReference>
<dbReference type="FunFam" id="2.30.42.10:FF:000011">
    <property type="entry name" value="partitioning defective 3 homolog isoform X1"/>
    <property type="match status" value="1"/>
</dbReference>
<dbReference type="FunFam" id="2.30.42.10:FF:000040">
    <property type="entry name" value="partitioning defective 3 homolog isoform X2"/>
    <property type="match status" value="1"/>
</dbReference>
<dbReference type="FunFam" id="3.10.20.90:FF:000017">
    <property type="entry name" value="partitioning defective 3 homolog isoform X2"/>
    <property type="match status" value="1"/>
</dbReference>
<dbReference type="Gene3D" id="2.30.42.10">
    <property type="match status" value="3"/>
</dbReference>
<dbReference type="Gene3D" id="3.10.20.90">
    <property type="entry name" value="Phosphatidylinositol 3-kinase Catalytic Subunit, Chain A, domain 1"/>
    <property type="match status" value="1"/>
</dbReference>
<dbReference type="InterPro" id="IPR052213">
    <property type="entry name" value="PAR3"/>
</dbReference>
<dbReference type="InterPro" id="IPR021922">
    <property type="entry name" value="Par3/HAL_N"/>
</dbReference>
<dbReference type="InterPro" id="IPR001478">
    <property type="entry name" value="PDZ"/>
</dbReference>
<dbReference type="InterPro" id="IPR036034">
    <property type="entry name" value="PDZ_sf"/>
</dbReference>
<dbReference type="PANTHER" id="PTHR16484:SF10">
    <property type="entry name" value="PARTITIONING DEFECTIVE 3 HOMOLOG"/>
    <property type="match status" value="1"/>
</dbReference>
<dbReference type="PANTHER" id="PTHR16484">
    <property type="entry name" value="PARTITIONING DEFECTIVE 3 RELATED"/>
    <property type="match status" value="1"/>
</dbReference>
<dbReference type="Pfam" id="PF12053">
    <property type="entry name" value="Par3_HAL_N_term"/>
    <property type="match status" value="1"/>
</dbReference>
<dbReference type="Pfam" id="PF00595">
    <property type="entry name" value="PDZ"/>
    <property type="match status" value="2"/>
</dbReference>
<dbReference type="SMART" id="SM00228">
    <property type="entry name" value="PDZ"/>
    <property type="match status" value="3"/>
</dbReference>
<dbReference type="SUPFAM" id="SSF50156">
    <property type="entry name" value="PDZ domain-like"/>
    <property type="match status" value="3"/>
</dbReference>
<dbReference type="PROSITE" id="PS50106">
    <property type="entry name" value="PDZ"/>
    <property type="match status" value="3"/>
</dbReference>